<evidence type="ECO:0000255" key="1"/>
<evidence type="ECO:0000269" key="2">
    <source>
    </source>
</evidence>
<evidence type="ECO:0000303" key="3">
    <source>
    </source>
</evidence>
<evidence type="ECO:0000305" key="4"/>
<organism>
    <name type="scientific">Vachellia farnesiana</name>
    <name type="common">Sweet acacia</name>
    <name type="synonym">Acacia farnesiana</name>
    <dbReference type="NCBI Taxonomy" id="72368"/>
    <lineage>
        <taxon>Eukaryota</taxon>
        <taxon>Viridiplantae</taxon>
        <taxon>Streptophyta</taxon>
        <taxon>Embryophyta</taxon>
        <taxon>Tracheophyta</taxon>
        <taxon>Spermatophyta</taxon>
        <taxon>Magnoliopsida</taxon>
        <taxon>eudicotyledons</taxon>
        <taxon>Gunneridae</taxon>
        <taxon>Pentapetalae</taxon>
        <taxon>rosids</taxon>
        <taxon>fabids</taxon>
        <taxon>Fabales</taxon>
        <taxon>Fabaceae</taxon>
        <taxon>Caesalpinioideae</taxon>
        <taxon>mimosoid clade</taxon>
        <taxon>Acacieae</taxon>
        <taxon>Vachellia</taxon>
    </lineage>
</organism>
<accession>P84849</accession>
<sequence length="225" mass="25063">FKNLNFNEQSLILQGDATVSSTGRLTNVVDNGEPRTSSLGRAFYSAPIWDKPTGRLASWREKIQEPNKAGPADGMAFALVPVGSEPKDKGAGLLGLFDEYDSNRHPVAVEFDTCYNLEHDPKERHSIRSIATPRWDFPNGENAEVLITYDEELQLLVASLVYPGERPYYLPSDRVEIEDELPEYVIPGFSATRGLNEGETHDVLSWSFASKMPDEQESEGLDLAE</sequence>
<keyword id="KW-0903">Direct protein sequencing</keyword>
<keyword id="KW-0430">Lectin</keyword>
<dbReference type="SMR" id="P84849"/>
<dbReference type="GO" id="GO:0030246">
    <property type="term" value="F:carbohydrate binding"/>
    <property type="evidence" value="ECO:0007669"/>
    <property type="project" value="UniProtKB-KW"/>
</dbReference>
<dbReference type="CDD" id="cd06899">
    <property type="entry name" value="lectin_legume_LecRK_Arcelin_ConA"/>
    <property type="match status" value="1"/>
</dbReference>
<dbReference type="Gene3D" id="2.60.120.200">
    <property type="match status" value="1"/>
</dbReference>
<dbReference type="InterPro" id="IPR013320">
    <property type="entry name" value="ConA-like_dom_sf"/>
</dbReference>
<dbReference type="InterPro" id="IPR016363">
    <property type="entry name" value="L-lectin"/>
</dbReference>
<dbReference type="InterPro" id="IPR019825">
    <property type="entry name" value="Lectin_legB_Mn/Ca_BS"/>
</dbReference>
<dbReference type="InterPro" id="IPR001220">
    <property type="entry name" value="Legume_lectin_dom"/>
</dbReference>
<dbReference type="InterPro" id="IPR050258">
    <property type="entry name" value="Leguminous_Lectin"/>
</dbReference>
<dbReference type="PANTHER" id="PTHR32401">
    <property type="entry name" value="CONCANAVALIN A-LIKE LECTIN FAMILY PROTEIN"/>
    <property type="match status" value="1"/>
</dbReference>
<dbReference type="PANTHER" id="PTHR32401:SF45">
    <property type="entry name" value="LECTIN"/>
    <property type="match status" value="1"/>
</dbReference>
<dbReference type="Pfam" id="PF00139">
    <property type="entry name" value="Lectin_legB"/>
    <property type="match status" value="1"/>
</dbReference>
<dbReference type="PIRSF" id="PIRSF002690">
    <property type="entry name" value="L-type_lectin_plant"/>
    <property type="match status" value="1"/>
</dbReference>
<dbReference type="SUPFAM" id="SSF49899">
    <property type="entry name" value="Concanavalin A-like lectins/glucanases"/>
    <property type="match status" value="1"/>
</dbReference>
<dbReference type="PROSITE" id="PS00307">
    <property type="entry name" value="LECTIN_LEGUME_BETA"/>
    <property type="match status" value="1"/>
</dbReference>
<reference evidence="4" key="1">
    <citation type="journal article" date="2008" name="Appl. Biochem. Biotechnol.">
        <title>Purification of a PHA-like chitin-binding protein from Acacia farnesiana seeds: a time-dependent oligomerization protein.</title>
        <authorList>
            <person name="Santi-Gadelha T."/>
            <person name="Rocha B.A.M."/>
            <person name="Oliveira C.C."/>
            <person name="Aragao K.S."/>
            <person name="Marinho E.S."/>
            <person name="Gadelha C.A.A."/>
            <person name="Toyama M.H."/>
            <person name="Pinto V.P.T."/>
            <person name="Nagano C.S."/>
            <person name="Delatorre P."/>
            <person name="Martins J.L."/>
            <person name="Galvani F.R."/>
            <person name="Sampaio A.H."/>
            <person name="Debray H."/>
            <person name="Cavada B.S."/>
        </authorList>
    </citation>
    <scope>PROTEIN SEQUENCE</scope>
    <scope>FUNCTION</scope>
    <scope>SUBUNIT</scope>
    <scope>MASS SPECTROMETRY</scope>
    <source>
        <tissue evidence="2">Seed</tissue>
    </source>
</reference>
<protein>
    <recommendedName>
        <fullName evidence="3">Lectin</fullName>
        <shortName>AFAL</shortName>
    </recommendedName>
</protein>
<feature type="chain" id="PRO_0000309556" description="Lectin">
    <location>
        <begin position="1"/>
        <end position="225"/>
    </location>
</feature>
<proteinExistence type="evidence at protein level"/>
<name>LEC_VACFA</name>
<comment type="function">
    <text evidence="2">Chitin-binding lectin. Agglutinates rabbit erythrocytes, but not human erythrocytes.</text>
</comment>
<comment type="subunit">
    <text evidence="2">Homotetramer.</text>
</comment>
<comment type="mass spectrometry" mass="24257.84" method="MALDI" evidence="2"/>
<comment type="similarity">
    <text evidence="1">Belongs to the leguminous lectin family.</text>
</comment>